<keyword id="KW-0067">ATP-binding</keyword>
<keyword id="KW-0133">Cell shape</keyword>
<keyword id="KW-0961">Cell wall biogenesis/degradation</keyword>
<keyword id="KW-0963">Cytoplasm</keyword>
<keyword id="KW-0436">Ligase</keyword>
<keyword id="KW-0460">Magnesium</keyword>
<keyword id="KW-0464">Manganese</keyword>
<keyword id="KW-0479">Metal-binding</keyword>
<keyword id="KW-0547">Nucleotide-binding</keyword>
<keyword id="KW-0573">Peptidoglycan synthesis</keyword>
<protein>
    <recommendedName>
        <fullName evidence="2">D-alanine--D-alanine ligase</fullName>
        <ecNumber evidence="2">6.3.2.4</ecNumber>
    </recommendedName>
    <alternativeName>
        <fullName evidence="2">D-Ala-D-Ala ligase</fullName>
    </alternativeName>
    <alternativeName>
        <fullName evidence="2">D-alanylalanine synthetase</fullName>
    </alternativeName>
</protein>
<feature type="chain" id="PRO_1000030425" description="D-alanine--D-alanine ligase">
    <location>
        <begin position="1"/>
        <end position="324"/>
    </location>
</feature>
<feature type="domain" description="ATP-grasp" evidence="2">
    <location>
        <begin position="121"/>
        <end position="321"/>
    </location>
</feature>
<feature type="binding site" evidence="2">
    <location>
        <begin position="149"/>
        <end position="204"/>
    </location>
    <ligand>
        <name>ATP</name>
        <dbReference type="ChEBI" id="CHEBI:30616"/>
    </ligand>
</feature>
<feature type="binding site" evidence="2">
    <location>
        <position position="275"/>
    </location>
    <ligand>
        <name>Mg(2+)</name>
        <dbReference type="ChEBI" id="CHEBI:18420"/>
        <label>1</label>
    </ligand>
</feature>
<feature type="binding site" evidence="2">
    <location>
        <position position="288"/>
    </location>
    <ligand>
        <name>Mg(2+)</name>
        <dbReference type="ChEBI" id="CHEBI:18420"/>
        <label>1</label>
    </ligand>
</feature>
<feature type="binding site" evidence="2">
    <location>
        <position position="288"/>
    </location>
    <ligand>
        <name>Mg(2+)</name>
        <dbReference type="ChEBI" id="CHEBI:18420"/>
        <label>2</label>
    </ligand>
</feature>
<feature type="binding site" evidence="2">
    <location>
        <position position="290"/>
    </location>
    <ligand>
        <name>Mg(2+)</name>
        <dbReference type="ChEBI" id="CHEBI:18420"/>
        <label>2</label>
    </ligand>
</feature>
<reference key="1">
    <citation type="journal article" date="2004" name="Proc. Natl. Acad. Sci. U.S.A.">
        <title>Genomic analysis of Bacteroides fragilis reveals extensive DNA inversions regulating cell surface adaptation.</title>
        <authorList>
            <person name="Kuwahara T."/>
            <person name="Yamashita A."/>
            <person name="Hirakawa H."/>
            <person name="Nakayama H."/>
            <person name="Toh H."/>
            <person name="Okada N."/>
            <person name="Kuhara S."/>
            <person name="Hattori M."/>
            <person name="Hayashi T."/>
            <person name="Ohnishi Y."/>
        </authorList>
    </citation>
    <scope>NUCLEOTIDE SEQUENCE [LARGE SCALE GENOMIC DNA]</scope>
    <source>
        <strain>YCH46</strain>
    </source>
</reference>
<organism>
    <name type="scientific">Bacteroides fragilis (strain YCH46)</name>
    <dbReference type="NCBI Taxonomy" id="295405"/>
    <lineage>
        <taxon>Bacteria</taxon>
        <taxon>Pseudomonadati</taxon>
        <taxon>Bacteroidota</taxon>
        <taxon>Bacteroidia</taxon>
        <taxon>Bacteroidales</taxon>
        <taxon>Bacteroidaceae</taxon>
        <taxon>Bacteroides</taxon>
    </lineage>
</organism>
<evidence type="ECO:0000250" key="1"/>
<evidence type="ECO:0000255" key="2">
    <source>
        <dbReference type="HAMAP-Rule" id="MF_00047"/>
    </source>
</evidence>
<accession>Q64Z37</accession>
<sequence>MKRNIAIVAGGDTSEIVVSLRSAQGIYSFIDKEKYNLYIVEMEGRRWEVQLPDGSKTPVDRNDFSFINGAEKVVFDFAYITIHGTPGEDGRLQGYFDMMRIPYSCCGVLAAAITYDKFVCNQYLKAFGVRISESLLLRQGQAVSDEDVVEKIGLPCFIKPNLGGSSFGVTKVKTREQIQPAIAKAFSEAEEVMIEAFMGGTELTCGCYKTKEKSVVFPLTEVVTHNEFFDYDAKYNGQVDEITPARISEELTRRVQTLTSAIYDILGCSGIIRVDYIITEGEKINLLEVNTTPGMTATSFIPQQVRAAGLDIKDVMTDIIENKF</sequence>
<proteinExistence type="inferred from homology"/>
<comment type="function">
    <text evidence="2">Cell wall formation.</text>
</comment>
<comment type="catalytic activity">
    <reaction evidence="2">
        <text>2 D-alanine + ATP = D-alanyl-D-alanine + ADP + phosphate + H(+)</text>
        <dbReference type="Rhea" id="RHEA:11224"/>
        <dbReference type="ChEBI" id="CHEBI:15378"/>
        <dbReference type="ChEBI" id="CHEBI:30616"/>
        <dbReference type="ChEBI" id="CHEBI:43474"/>
        <dbReference type="ChEBI" id="CHEBI:57416"/>
        <dbReference type="ChEBI" id="CHEBI:57822"/>
        <dbReference type="ChEBI" id="CHEBI:456216"/>
        <dbReference type="EC" id="6.3.2.4"/>
    </reaction>
</comment>
<comment type="cofactor">
    <cofactor evidence="1">
        <name>Mg(2+)</name>
        <dbReference type="ChEBI" id="CHEBI:18420"/>
    </cofactor>
    <cofactor evidence="1">
        <name>Mn(2+)</name>
        <dbReference type="ChEBI" id="CHEBI:29035"/>
    </cofactor>
    <text evidence="1">Binds 2 magnesium or manganese ions per subunit.</text>
</comment>
<comment type="pathway">
    <text evidence="2">Cell wall biogenesis; peptidoglycan biosynthesis.</text>
</comment>
<comment type="subcellular location">
    <subcellularLocation>
        <location evidence="2">Cytoplasm</location>
    </subcellularLocation>
</comment>
<comment type="similarity">
    <text evidence="2">Belongs to the D-alanine--D-alanine ligase family.</text>
</comment>
<gene>
    <name evidence="2" type="primary">ddl</name>
    <name type="ordered locus">BF0490</name>
</gene>
<dbReference type="EC" id="6.3.2.4" evidence="2"/>
<dbReference type="EMBL" id="AP006841">
    <property type="protein sequence ID" value="BAD47239.1"/>
    <property type="molecule type" value="Genomic_DNA"/>
</dbReference>
<dbReference type="RefSeq" id="WP_011202023.1">
    <property type="nucleotide sequence ID" value="NC_006347.1"/>
</dbReference>
<dbReference type="RefSeq" id="YP_097773.1">
    <property type="nucleotide sequence ID" value="NC_006347.1"/>
</dbReference>
<dbReference type="SMR" id="Q64Z37"/>
<dbReference type="STRING" id="295405.BF0490"/>
<dbReference type="KEGG" id="bfr:BF0490"/>
<dbReference type="PATRIC" id="fig|295405.11.peg.507"/>
<dbReference type="HOGENOM" id="CLU_039268_1_1_10"/>
<dbReference type="OrthoDB" id="9813261at2"/>
<dbReference type="UniPathway" id="UPA00219"/>
<dbReference type="Proteomes" id="UP000002197">
    <property type="component" value="Chromosome"/>
</dbReference>
<dbReference type="GO" id="GO:0005737">
    <property type="term" value="C:cytoplasm"/>
    <property type="evidence" value="ECO:0007669"/>
    <property type="project" value="UniProtKB-SubCell"/>
</dbReference>
<dbReference type="GO" id="GO:0005524">
    <property type="term" value="F:ATP binding"/>
    <property type="evidence" value="ECO:0007669"/>
    <property type="project" value="UniProtKB-KW"/>
</dbReference>
<dbReference type="GO" id="GO:0008716">
    <property type="term" value="F:D-alanine-D-alanine ligase activity"/>
    <property type="evidence" value="ECO:0007669"/>
    <property type="project" value="UniProtKB-UniRule"/>
</dbReference>
<dbReference type="GO" id="GO:0046872">
    <property type="term" value="F:metal ion binding"/>
    <property type="evidence" value="ECO:0007669"/>
    <property type="project" value="UniProtKB-KW"/>
</dbReference>
<dbReference type="GO" id="GO:0071555">
    <property type="term" value="P:cell wall organization"/>
    <property type="evidence" value="ECO:0007669"/>
    <property type="project" value="UniProtKB-KW"/>
</dbReference>
<dbReference type="GO" id="GO:0009252">
    <property type="term" value="P:peptidoglycan biosynthetic process"/>
    <property type="evidence" value="ECO:0007669"/>
    <property type="project" value="UniProtKB-UniRule"/>
</dbReference>
<dbReference type="GO" id="GO:0008360">
    <property type="term" value="P:regulation of cell shape"/>
    <property type="evidence" value="ECO:0007669"/>
    <property type="project" value="UniProtKB-KW"/>
</dbReference>
<dbReference type="Gene3D" id="3.40.50.20">
    <property type="match status" value="1"/>
</dbReference>
<dbReference type="Gene3D" id="3.30.1490.20">
    <property type="entry name" value="ATP-grasp fold, A domain"/>
    <property type="match status" value="1"/>
</dbReference>
<dbReference type="Gene3D" id="3.30.470.20">
    <property type="entry name" value="ATP-grasp fold, B domain"/>
    <property type="match status" value="1"/>
</dbReference>
<dbReference type="HAMAP" id="MF_00047">
    <property type="entry name" value="Dala_Dala_lig"/>
    <property type="match status" value="1"/>
</dbReference>
<dbReference type="InterPro" id="IPR011761">
    <property type="entry name" value="ATP-grasp"/>
</dbReference>
<dbReference type="InterPro" id="IPR013815">
    <property type="entry name" value="ATP_grasp_subdomain_1"/>
</dbReference>
<dbReference type="InterPro" id="IPR000291">
    <property type="entry name" value="D-Ala_lig_Van_CS"/>
</dbReference>
<dbReference type="InterPro" id="IPR005905">
    <property type="entry name" value="D_ala_D_ala"/>
</dbReference>
<dbReference type="InterPro" id="IPR011095">
    <property type="entry name" value="Dala_Dala_lig_C"/>
</dbReference>
<dbReference type="InterPro" id="IPR011127">
    <property type="entry name" value="Dala_Dala_lig_N"/>
</dbReference>
<dbReference type="InterPro" id="IPR016185">
    <property type="entry name" value="PreATP-grasp_dom_sf"/>
</dbReference>
<dbReference type="NCBIfam" id="TIGR01205">
    <property type="entry name" value="D_ala_D_alaTIGR"/>
    <property type="match status" value="1"/>
</dbReference>
<dbReference type="NCBIfam" id="NF002378">
    <property type="entry name" value="PRK01372.1"/>
    <property type="match status" value="1"/>
</dbReference>
<dbReference type="NCBIfam" id="NF002527">
    <property type="entry name" value="PRK01966.1-3"/>
    <property type="match status" value="1"/>
</dbReference>
<dbReference type="PANTHER" id="PTHR23132">
    <property type="entry name" value="D-ALANINE--D-ALANINE LIGASE"/>
    <property type="match status" value="1"/>
</dbReference>
<dbReference type="PANTHER" id="PTHR23132:SF23">
    <property type="entry name" value="D-ALANINE--D-ALANINE LIGASE B"/>
    <property type="match status" value="1"/>
</dbReference>
<dbReference type="Pfam" id="PF07478">
    <property type="entry name" value="Dala_Dala_lig_C"/>
    <property type="match status" value="1"/>
</dbReference>
<dbReference type="Pfam" id="PF01820">
    <property type="entry name" value="Dala_Dala_lig_N"/>
    <property type="match status" value="1"/>
</dbReference>
<dbReference type="PIRSF" id="PIRSF039102">
    <property type="entry name" value="Ddl/VanB"/>
    <property type="match status" value="1"/>
</dbReference>
<dbReference type="SUPFAM" id="SSF56059">
    <property type="entry name" value="Glutathione synthetase ATP-binding domain-like"/>
    <property type="match status" value="1"/>
</dbReference>
<dbReference type="SUPFAM" id="SSF52440">
    <property type="entry name" value="PreATP-grasp domain"/>
    <property type="match status" value="1"/>
</dbReference>
<dbReference type="PROSITE" id="PS50975">
    <property type="entry name" value="ATP_GRASP"/>
    <property type="match status" value="1"/>
</dbReference>
<dbReference type="PROSITE" id="PS00843">
    <property type="entry name" value="DALA_DALA_LIGASE_1"/>
    <property type="match status" value="1"/>
</dbReference>
<dbReference type="PROSITE" id="PS00844">
    <property type="entry name" value="DALA_DALA_LIGASE_2"/>
    <property type="match status" value="1"/>
</dbReference>
<name>DDL_BACFR</name>